<geneLocation type="chloroplast"/>
<proteinExistence type="inferred from homology"/>
<sequence length="101" mass="11212">MIFEHALVLSAYLFSIGIYGLITSRNMVRALMCLELILNAVNINLVTFSDFFDSRQLKGNIFSIFVIAIAAAEAAIGPAIVSSIYRNRKSTRINQSNLLNK</sequence>
<feature type="chain" id="PRO_0000277450" description="NAD(P)H-quinone oxidoreductase subunit 4L, chloroplastic">
    <location>
        <begin position="1"/>
        <end position="101"/>
    </location>
</feature>
<feature type="transmembrane region" description="Helical" evidence="1">
    <location>
        <begin position="2"/>
        <end position="22"/>
    </location>
</feature>
<feature type="transmembrane region" description="Helical" evidence="1">
    <location>
        <begin position="32"/>
        <end position="52"/>
    </location>
</feature>
<feature type="transmembrane region" description="Helical" evidence="1">
    <location>
        <begin position="61"/>
        <end position="81"/>
    </location>
</feature>
<comment type="function">
    <text evidence="1">NDH shuttles electrons from NAD(P)H:plastoquinone, via FMN and iron-sulfur (Fe-S) centers, to quinones in the photosynthetic chain and possibly in a chloroplast respiratory chain. The immediate electron acceptor for the enzyme in this species is believed to be plastoquinone. Couples the redox reaction to proton translocation, and thus conserves the redox energy in a proton gradient.</text>
</comment>
<comment type="catalytic activity">
    <reaction evidence="1">
        <text>a plastoquinone + NADH + (n+1) H(+)(in) = a plastoquinol + NAD(+) + n H(+)(out)</text>
        <dbReference type="Rhea" id="RHEA:42608"/>
        <dbReference type="Rhea" id="RHEA-COMP:9561"/>
        <dbReference type="Rhea" id="RHEA-COMP:9562"/>
        <dbReference type="ChEBI" id="CHEBI:15378"/>
        <dbReference type="ChEBI" id="CHEBI:17757"/>
        <dbReference type="ChEBI" id="CHEBI:57540"/>
        <dbReference type="ChEBI" id="CHEBI:57945"/>
        <dbReference type="ChEBI" id="CHEBI:62192"/>
    </reaction>
</comment>
<comment type="catalytic activity">
    <reaction evidence="1">
        <text>a plastoquinone + NADPH + (n+1) H(+)(in) = a plastoquinol + NADP(+) + n H(+)(out)</text>
        <dbReference type="Rhea" id="RHEA:42612"/>
        <dbReference type="Rhea" id="RHEA-COMP:9561"/>
        <dbReference type="Rhea" id="RHEA-COMP:9562"/>
        <dbReference type="ChEBI" id="CHEBI:15378"/>
        <dbReference type="ChEBI" id="CHEBI:17757"/>
        <dbReference type="ChEBI" id="CHEBI:57783"/>
        <dbReference type="ChEBI" id="CHEBI:58349"/>
        <dbReference type="ChEBI" id="CHEBI:62192"/>
    </reaction>
</comment>
<comment type="subunit">
    <text evidence="1">NDH is composed of at least 16 different subunits, 5 of which are encoded in the nucleus.</text>
</comment>
<comment type="subcellular location">
    <subcellularLocation>
        <location evidence="1">Plastid</location>
        <location evidence="1">Chloroplast thylakoid membrane</location>
        <topology evidence="1">Multi-pass membrane protein</topology>
    </subcellularLocation>
</comment>
<comment type="similarity">
    <text evidence="1">Belongs to the complex I subunit 4L family.</text>
</comment>
<organism>
    <name type="scientific">Glycine max</name>
    <name type="common">Soybean</name>
    <name type="synonym">Glycine hispida</name>
    <dbReference type="NCBI Taxonomy" id="3847"/>
    <lineage>
        <taxon>Eukaryota</taxon>
        <taxon>Viridiplantae</taxon>
        <taxon>Streptophyta</taxon>
        <taxon>Embryophyta</taxon>
        <taxon>Tracheophyta</taxon>
        <taxon>Spermatophyta</taxon>
        <taxon>Magnoliopsida</taxon>
        <taxon>eudicotyledons</taxon>
        <taxon>Gunneridae</taxon>
        <taxon>Pentapetalae</taxon>
        <taxon>rosids</taxon>
        <taxon>fabids</taxon>
        <taxon>Fabales</taxon>
        <taxon>Fabaceae</taxon>
        <taxon>Papilionoideae</taxon>
        <taxon>50 kb inversion clade</taxon>
        <taxon>NPAAA clade</taxon>
        <taxon>indigoferoid/millettioid clade</taxon>
        <taxon>Phaseoleae</taxon>
        <taxon>Glycine</taxon>
        <taxon>Glycine subgen. Soja</taxon>
    </lineage>
</organism>
<evidence type="ECO:0000255" key="1">
    <source>
        <dbReference type="HAMAP-Rule" id="MF_01456"/>
    </source>
</evidence>
<name>NU4LC_SOYBN</name>
<gene>
    <name evidence="1" type="primary">ndhE</name>
</gene>
<accession>Q2PMN4</accession>
<keyword id="KW-0150">Chloroplast</keyword>
<keyword id="KW-0472">Membrane</keyword>
<keyword id="KW-0520">NAD</keyword>
<keyword id="KW-0521">NADP</keyword>
<keyword id="KW-0934">Plastid</keyword>
<keyword id="KW-0618">Plastoquinone</keyword>
<keyword id="KW-0874">Quinone</keyword>
<keyword id="KW-1185">Reference proteome</keyword>
<keyword id="KW-0793">Thylakoid</keyword>
<keyword id="KW-1278">Translocase</keyword>
<keyword id="KW-0812">Transmembrane</keyword>
<keyword id="KW-1133">Transmembrane helix</keyword>
<keyword id="KW-0813">Transport</keyword>
<reference key="1">
    <citation type="journal article" date="2005" name="Plant Mol. Biol.">
        <title>Complete chloroplast genome sequence of Glycine max and comparative analyses with other legume genomes.</title>
        <authorList>
            <person name="Saski C."/>
            <person name="Lee S.-B."/>
            <person name="Daniell H."/>
            <person name="Wood T.C."/>
            <person name="Tomkins J."/>
            <person name="Kim H.-G."/>
            <person name="Jansen R.K."/>
        </authorList>
    </citation>
    <scope>NUCLEOTIDE SEQUENCE [LARGE SCALE GENOMIC DNA]</scope>
    <source>
        <strain>cv. PI 437654</strain>
    </source>
</reference>
<protein>
    <recommendedName>
        <fullName evidence="1">NAD(P)H-quinone oxidoreductase subunit 4L, chloroplastic</fullName>
        <ecNumber evidence="1">7.1.1.-</ecNumber>
    </recommendedName>
    <alternativeName>
        <fullName evidence="1">NAD(P)H dehydrogenase subunit 4L</fullName>
    </alternativeName>
    <alternativeName>
        <fullName evidence="1">NADH-plastoquinone oxidoreductase subunit 4L</fullName>
    </alternativeName>
</protein>
<dbReference type="EC" id="7.1.1.-" evidence="1"/>
<dbReference type="EMBL" id="DQ317523">
    <property type="protein sequence ID" value="ABC25175.1"/>
    <property type="molecule type" value="Genomic_DNA"/>
</dbReference>
<dbReference type="RefSeq" id="YP_538816.1">
    <property type="nucleotide sequence ID" value="NC_007942.1"/>
</dbReference>
<dbReference type="SMR" id="Q2PMN4"/>
<dbReference type="FunCoup" id="Q2PMN4">
    <property type="interactions" value="97"/>
</dbReference>
<dbReference type="STRING" id="3847.Q2PMN4"/>
<dbReference type="GeneID" id="3989359"/>
<dbReference type="KEGG" id="gmx:3989359"/>
<dbReference type="InParanoid" id="Q2PMN4"/>
<dbReference type="Proteomes" id="UP000008827">
    <property type="component" value="Chloroplast"/>
</dbReference>
<dbReference type="GO" id="GO:0009535">
    <property type="term" value="C:chloroplast thylakoid membrane"/>
    <property type="evidence" value="ECO:0007669"/>
    <property type="project" value="UniProtKB-SubCell"/>
</dbReference>
<dbReference type="GO" id="GO:0030964">
    <property type="term" value="C:NADH dehydrogenase complex"/>
    <property type="evidence" value="ECO:0000318"/>
    <property type="project" value="GO_Central"/>
</dbReference>
<dbReference type="GO" id="GO:0016655">
    <property type="term" value="F:oxidoreductase activity, acting on NAD(P)H, quinone or similar compound as acceptor"/>
    <property type="evidence" value="ECO:0007669"/>
    <property type="project" value="UniProtKB-UniRule"/>
</dbReference>
<dbReference type="GO" id="GO:0048038">
    <property type="term" value="F:quinone binding"/>
    <property type="evidence" value="ECO:0007669"/>
    <property type="project" value="UniProtKB-KW"/>
</dbReference>
<dbReference type="GO" id="GO:0042773">
    <property type="term" value="P:ATP synthesis coupled electron transport"/>
    <property type="evidence" value="ECO:0007669"/>
    <property type="project" value="InterPro"/>
</dbReference>
<dbReference type="GO" id="GO:0019684">
    <property type="term" value="P:photosynthesis, light reaction"/>
    <property type="evidence" value="ECO:0007669"/>
    <property type="project" value="UniProtKB-UniRule"/>
</dbReference>
<dbReference type="FunFam" id="1.10.287.3510:FF:000001">
    <property type="entry name" value="NADH-quinone oxidoreductase subunit K"/>
    <property type="match status" value="1"/>
</dbReference>
<dbReference type="Gene3D" id="1.10.287.3510">
    <property type="match status" value="1"/>
</dbReference>
<dbReference type="HAMAP" id="MF_01456">
    <property type="entry name" value="NDH1_NuoK"/>
    <property type="match status" value="1"/>
</dbReference>
<dbReference type="InterPro" id="IPR001133">
    <property type="entry name" value="NADH_UbQ_OxRdtase_chain4L/K"/>
</dbReference>
<dbReference type="InterPro" id="IPR039428">
    <property type="entry name" value="NUOK/Mnh_C1-like"/>
</dbReference>
<dbReference type="NCBIfam" id="NF004320">
    <property type="entry name" value="PRK05715.1-2"/>
    <property type="match status" value="1"/>
</dbReference>
<dbReference type="NCBIfam" id="NF004322">
    <property type="entry name" value="PRK05715.1-4"/>
    <property type="match status" value="1"/>
</dbReference>
<dbReference type="PANTHER" id="PTHR11434:SF16">
    <property type="entry name" value="NADH-UBIQUINONE OXIDOREDUCTASE CHAIN 4L"/>
    <property type="match status" value="1"/>
</dbReference>
<dbReference type="PANTHER" id="PTHR11434">
    <property type="entry name" value="NADH-UBIQUINONE OXIDOREDUCTASE SUBUNIT ND4L"/>
    <property type="match status" value="1"/>
</dbReference>
<dbReference type="Pfam" id="PF00420">
    <property type="entry name" value="Oxidored_q2"/>
    <property type="match status" value="1"/>
</dbReference>